<name>RHAR_SHIBS</name>
<sequence>MAHQLKLLKDDFFASDQQAVAVADRYPQDVFAEHTHDFCELVIVWRGNGLHVLNDRPYRITRGDLFYIHADDKHSYASVNDLVLQNIIYCPERLKLNLDWQGAIPGFSASAGQPHWRLGSVGMAQARQVIGQLEHESSQHVSFANEMAELLFGQLVMLLNRHRYTSDSLPPTSSETLLDKLITRLAASLKSPFALDKFCDEASCSERVLRQQFRQQTGMTINQYLRQVRVCHAQYLLQHSRLLISDISTECGFEDSNYFSVVFTRETGMTPSQWRHLNSQKD</sequence>
<evidence type="ECO:0000255" key="1">
    <source>
        <dbReference type="HAMAP-Rule" id="MF_01533"/>
    </source>
</evidence>
<evidence type="ECO:0000305" key="2"/>
<accession>Q31U83</accession>
<gene>
    <name evidence="1" type="primary">rhaR</name>
    <name type="ordered locus">SBO_3924</name>
</gene>
<reference key="1">
    <citation type="journal article" date="2005" name="Nucleic Acids Res.">
        <title>Genome dynamics and diversity of Shigella species, the etiologic agents of bacillary dysentery.</title>
        <authorList>
            <person name="Yang F."/>
            <person name="Yang J."/>
            <person name="Zhang X."/>
            <person name="Chen L."/>
            <person name="Jiang Y."/>
            <person name="Yan Y."/>
            <person name="Tang X."/>
            <person name="Wang J."/>
            <person name="Xiong Z."/>
            <person name="Dong J."/>
            <person name="Xue Y."/>
            <person name="Zhu Y."/>
            <person name="Xu X."/>
            <person name="Sun L."/>
            <person name="Chen S."/>
            <person name="Nie H."/>
            <person name="Peng J."/>
            <person name="Xu J."/>
            <person name="Wang Y."/>
            <person name="Yuan Z."/>
            <person name="Wen Y."/>
            <person name="Yao Z."/>
            <person name="Shen Y."/>
            <person name="Qiang B."/>
            <person name="Hou Y."/>
            <person name="Yu J."/>
            <person name="Jin Q."/>
        </authorList>
    </citation>
    <scope>NUCLEOTIDE SEQUENCE [LARGE SCALE GENOMIC DNA]</scope>
    <source>
        <strain>Sb227</strain>
    </source>
</reference>
<keyword id="KW-0010">Activator</keyword>
<keyword id="KW-0963">Cytoplasm</keyword>
<keyword id="KW-0238">DNA-binding</keyword>
<keyword id="KW-0677">Repeat</keyword>
<keyword id="KW-0684">Rhamnose metabolism</keyword>
<keyword id="KW-0804">Transcription</keyword>
<keyword id="KW-0805">Transcription regulation</keyword>
<comment type="function">
    <text evidence="1">Activates expression of the rhaSR operon in response to L-rhamnose.</text>
</comment>
<comment type="subunit">
    <text evidence="1">Binds DNA as a dimer.</text>
</comment>
<comment type="subcellular location">
    <subcellularLocation>
        <location evidence="1">Cytoplasm</location>
    </subcellularLocation>
</comment>
<comment type="sequence caution" evidence="2">
    <conflict type="erroneous initiation">
        <sequence resource="EMBL-CDS" id="ABB68375"/>
    </conflict>
</comment>
<feature type="chain" id="PRO_0000292774" description="HTH-type transcriptional activator RhaR">
    <location>
        <begin position="1"/>
        <end position="282"/>
    </location>
</feature>
<feature type="domain" description="HTH araC/xylS-type" evidence="1">
    <location>
        <begin position="179"/>
        <end position="277"/>
    </location>
</feature>
<feature type="DNA-binding region" description="H-T-H motif" evidence="1">
    <location>
        <begin position="196"/>
        <end position="217"/>
    </location>
</feature>
<feature type="DNA-binding region" description="H-T-H motif" evidence="1">
    <location>
        <begin position="244"/>
        <end position="267"/>
    </location>
</feature>
<feature type="site" description="Interaction with sigma-70" evidence="1">
    <location>
        <position position="246"/>
    </location>
</feature>
<dbReference type="EMBL" id="CP000036">
    <property type="protein sequence ID" value="ABB68375.1"/>
    <property type="status" value="ALT_INIT"/>
    <property type="molecule type" value="Genomic_DNA"/>
</dbReference>
<dbReference type="RefSeq" id="WP_001298410.1">
    <property type="nucleotide sequence ID" value="NC_007613.1"/>
</dbReference>
<dbReference type="SMR" id="Q31U83"/>
<dbReference type="GeneID" id="93778032"/>
<dbReference type="KEGG" id="sbo:SBO_3924"/>
<dbReference type="HOGENOM" id="CLU_000445_88_5_6"/>
<dbReference type="Proteomes" id="UP000007067">
    <property type="component" value="Chromosome"/>
</dbReference>
<dbReference type="GO" id="GO:0005737">
    <property type="term" value="C:cytoplasm"/>
    <property type="evidence" value="ECO:0007669"/>
    <property type="project" value="UniProtKB-SubCell"/>
</dbReference>
<dbReference type="GO" id="GO:0003700">
    <property type="term" value="F:DNA-binding transcription factor activity"/>
    <property type="evidence" value="ECO:0007669"/>
    <property type="project" value="UniProtKB-UniRule"/>
</dbReference>
<dbReference type="GO" id="GO:0043565">
    <property type="term" value="F:sequence-specific DNA binding"/>
    <property type="evidence" value="ECO:0007669"/>
    <property type="project" value="InterPro"/>
</dbReference>
<dbReference type="GO" id="GO:0045893">
    <property type="term" value="P:positive regulation of DNA-templated transcription"/>
    <property type="evidence" value="ECO:0007669"/>
    <property type="project" value="UniProtKB-UniRule"/>
</dbReference>
<dbReference type="GO" id="GO:0019299">
    <property type="term" value="P:rhamnose metabolic process"/>
    <property type="evidence" value="ECO:0007669"/>
    <property type="project" value="UniProtKB-UniRule"/>
</dbReference>
<dbReference type="CDD" id="cd06977">
    <property type="entry name" value="cupin_RhaR_RhaS-like_N"/>
    <property type="match status" value="1"/>
</dbReference>
<dbReference type="Gene3D" id="1.10.10.60">
    <property type="entry name" value="Homeodomain-like"/>
    <property type="match status" value="2"/>
</dbReference>
<dbReference type="Gene3D" id="2.60.120.10">
    <property type="entry name" value="Jelly Rolls"/>
    <property type="match status" value="1"/>
</dbReference>
<dbReference type="HAMAP" id="MF_01533">
    <property type="entry name" value="HTH_type_RhaR"/>
    <property type="match status" value="1"/>
</dbReference>
<dbReference type="InterPro" id="IPR003313">
    <property type="entry name" value="AraC-bd"/>
</dbReference>
<dbReference type="InterPro" id="IPR009057">
    <property type="entry name" value="Homeodomain-like_sf"/>
</dbReference>
<dbReference type="InterPro" id="IPR018060">
    <property type="entry name" value="HTH_AraC"/>
</dbReference>
<dbReference type="InterPro" id="IPR018062">
    <property type="entry name" value="HTH_AraC-typ_CS"/>
</dbReference>
<dbReference type="InterPro" id="IPR047220">
    <property type="entry name" value="RhaR_RhaS-like_N"/>
</dbReference>
<dbReference type="InterPro" id="IPR014710">
    <property type="entry name" value="RmlC-like_jellyroll"/>
</dbReference>
<dbReference type="InterPro" id="IPR011051">
    <property type="entry name" value="RmlC_Cupin_sf"/>
</dbReference>
<dbReference type="InterPro" id="IPR023699">
    <property type="entry name" value="Tscrpt_act_RhaR"/>
</dbReference>
<dbReference type="InterPro" id="IPR020449">
    <property type="entry name" value="Tscrpt_reg_AraC-type_HTH"/>
</dbReference>
<dbReference type="NCBIfam" id="NF010025">
    <property type="entry name" value="PRK13500.1"/>
    <property type="match status" value="1"/>
</dbReference>
<dbReference type="NCBIfam" id="NF010026">
    <property type="entry name" value="PRK13501.1"/>
    <property type="match status" value="1"/>
</dbReference>
<dbReference type="NCBIfam" id="NF010027">
    <property type="entry name" value="PRK13502.1"/>
    <property type="match status" value="1"/>
</dbReference>
<dbReference type="PANTHER" id="PTHR43280">
    <property type="entry name" value="ARAC-FAMILY TRANSCRIPTIONAL REGULATOR"/>
    <property type="match status" value="1"/>
</dbReference>
<dbReference type="PANTHER" id="PTHR43280:SF13">
    <property type="entry name" value="HTH-TYPE TRANSCRIPTIONAL ACTIVATOR RHAR"/>
    <property type="match status" value="1"/>
</dbReference>
<dbReference type="Pfam" id="PF02311">
    <property type="entry name" value="AraC_binding"/>
    <property type="match status" value="1"/>
</dbReference>
<dbReference type="Pfam" id="PF12833">
    <property type="entry name" value="HTH_18"/>
    <property type="match status" value="1"/>
</dbReference>
<dbReference type="PRINTS" id="PR00032">
    <property type="entry name" value="HTHARAC"/>
</dbReference>
<dbReference type="SMART" id="SM00342">
    <property type="entry name" value="HTH_ARAC"/>
    <property type="match status" value="1"/>
</dbReference>
<dbReference type="SUPFAM" id="SSF46689">
    <property type="entry name" value="Homeodomain-like"/>
    <property type="match status" value="2"/>
</dbReference>
<dbReference type="SUPFAM" id="SSF51182">
    <property type="entry name" value="RmlC-like cupins"/>
    <property type="match status" value="1"/>
</dbReference>
<dbReference type="PROSITE" id="PS00041">
    <property type="entry name" value="HTH_ARAC_FAMILY_1"/>
    <property type="match status" value="1"/>
</dbReference>
<dbReference type="PROSITE" id="PS01124">
    <property type="entry name" value="HTH_ARAC_FAMILY_2"/>
    <property type="match status" value="1"/>
</dbReference>
<protein>
    <recommendedName>
        <fullName evidence="1">HTH-type transcriptional activator RhaR</fullName>
    </recommendedName>
    <alternativeName>
        <fullName evidence="1">L-rhamnose operon transcriptional activator RhaR</fullName>
    </alternativeName>
</protein>
<proteinExistence type="inferred from homology"/>
<organism>
    <name type="scientific">Shigella boydii serotype 4 (strain Sb227)</name>
    <dbReference type="NCBI Taxonomy" id="300268"/>
    <lineage>
        <taxon>Bacteria</taxon>
        <taxon>Pseudomonadati</taxon>
        <taxon>Pseudomonadota</taxon>
        <taxon>Gammaproteobacteria</taxon>
        <taxon>Enterobacterales</taxon>
        <taxon>Enterobacteriaceae</taxon>
        <taxon>Shigella</taxon>
    </lineage>
</organism>